<name>RL34_CLOBB</name>
<comment type="similarity">
    <text evidence="1">Belongs to the bacterial ribosomal protein bL34 family.</text>
</comment>
<organism>
    <name type="scientific">Clostridium botulinum (strain Eklund 17B / Type B)</name>
    <dbReference type="NCBI Taxonomy" id="935198"/>
    <lineage>
        <taxon>Bacteria</taxon>
        <taxon>Bacillati</taxon>
        <taxon>Bacillota</taxon>
        <taxon>Clostridia</taxon>
        <taxon>Eubacteriales</taxon>
        <taxon>Clostridiaceae</taxon>
        <taxon>Clostridium</taxon>
    </lineage>
</organism>
<reference key="1">
    <citation type="submission" date="2008-04" db="EMBL/GenBank/DDBJ databases">
        <title>Complete sequence of Clostridium botulinum strain Eklund.</title>
        <authorList>
            <person name="Brinkac L.M."/>
            <person name="Brown J.L."/>
            <person name="Bruce D."/>
            <person name="Detter C."/>
            <person name="Munk C."/>
            <person name="Smith L.A."/>
            <person name="Smith T.J."/>
            <person name="Sutton G."/>
            <person name="Brettin T.S."/>
        </authorList>
    </citation>
    <scope>NUCLEOTIDE SEQUENCE [LARGE SCALE GENOMIC DNA]</scope>
    <source>
        <strain>Eklund 17B / Type B</strain>
    </source>
</reference>
<accession>B2TRI4</accession>
<dbReference type="EMBL" id="CP001056">
    <property type="protein sequence ID" value="ACD24097.1"/>
    <property type="molecule type" value="Genomic_DNA"/>
</dbReference>
<dbReference type="SMR" id="B2TRI4"/>
<dbReference type="KEGG" id="cbk:CLL_A3604"/>
<dbReference type="PATRIC" id="fig|935198.13.peg.3527"/>
<dbReference type="HOGENOM" id="CLU_129938_2_0_9"/>
<dbReference type="Proteomes" id="UP000001195">
    <property type="component" value="Chromosome"/>
</dbReference>
<dbReference type="GO" id="GO:1990904">
    <property type="term" value="C:ribonucleoprotein complex"/>
    <property type="evidence" value="ECO:0007669"/>
    <property type="project" value="UniProtKB-KW"/>
</dbReference>
<dbReference type="GO" id="GO:0005840">
    <property type="term" value="C:ribosome"/>
    <property type="evidence" value="ECO:0007669"/>
    <property type="project" value="UniProtKB-KW"/>
</dbReference>
<dbReference type="GO" id="GO:0003735">
    <property type="term" value="F:structural constituent of ribosome"/>
    <property type="evidence" value="ECO:0007669"/>
    <property type="project" value="InterPro"/>
</dbReference>
<dbReference type="GO" id="GO:0006412">
    <property type="term" value="P:translation"/>
    <property type="evidence" value="ECO:0007669"/>
    <property type="project" value="UniProtKB-UniRule"/>
</dbReference>
<dbReference type="FunFam" id="1.10.287.3980:FF:000001">
    <property type="entry name" value="Mitochondrial ribosomal protein L34"/>
    <property type="match status" value="1"/>
</dbReference>
<dbReference type="Gene3D" id="1.10.287.3980">
    <property type="match status" value="1"/>
</dbReference>
<dbReference type="HAMAP" id="MF_00391">
    <property type="entry name" value="Ribosomal_bL34"/>
    <property type="match status" value="1"/>
</dbReference>
<dbReference type="InterPro" id="IPR000271">
    <property type="entry name" value="Ribosomal_bL34"/>
</dbReference>
<dbReference type="InterPro" id="IPR020939">
    <property type="entry name" value="Ribosomal_bL34_CS"/>
</dbReference>
<dbReference type="NCBIfam" id="TIGR01030">
    <property type="entry name" value="rpmH_bact"/>
    <property type="match status" value="1"/>
</dbReference>
<dbReference type="PANTHER" id="PTHR14503:SF4">
    <property type="entry name" value="LARGE RIBOSOMAL SUBUNIT PROTEIN BL34M"/>
    <property type="match status" value="1"/>
</dbReference>
<dbReference type="PANTHER" id="PTHR14503">
    <property type="entry name" value="MITOCHONDRIAL RIBOSOMAL PROTEIN 34 FAMILY MEMBER"/>
    <property type="match status" value="1"/>
</dbReference>
<dbReference type="Pfam" id="PF00468">
    <property type="entry name" value="Ribosomal_L34"/>
    <property type="match status" value="1"/>
</dbReference>
<dbReference type="PROSITE" id="PS00784">
    <property type="entry name" value="RIBOSOMAL_L34"/>
    <property type="match status" value="1"/>
</dbReference>
<proteinExistence type="inferred from homology"/>
<evidence type="ECO:0000255" key="1">
    <source>
        <dbReference type="HAMAP-Rule" id="MF_00391"/>
    </source>
</evidence>
<evidence type="ECO:0000256" key="2">
    <source>
        <dbReference type="SAM" id="MobiDB-lite"/>
    </source>
</evidence>
<evidence type="ECO:0000305" key="3"/>
<gene>
    <name evidence="1" type="primary">rpmH</name>
    <name type="ordered locus">CLL_A3604</name>
</gene>
<sequence>MFMTYQPKKRQRKKEHGFRKRMSTQSGRNILRKRRQKGRKKLTA</sequence>
<feature type="chain" id="PRO_1000196025" description="Large ribosomal subunit protein bL34">
    <location>
        <begin position="1"/>
        <end position="44"/>
    </location>
</feature>
<feature type="region of interest" description="Disordered" evidence="2">
    <location>
        <begin position="1"/>
        <end position="44"/>
    </location>
</feature>
<feature type="compositionally biased region" description="Basic residues" evidence="2">
    <location>
        <begin position="7"/>
        <end position="22"/>
    </location>
</feature>
<feature type="compositionally biased region" description="Basic residues" evidence="2">
    <location>
        <begin position="30"/>
        <end position="44"/>
    </location>
</feature>
<keyword id="KW-0687">Ribonucleoprotein</keyword>
<keyword id="KW-0689">Ribosomal protein</keyword>
<protein>
    <recommendedName>
        <fullName evidence="1">Large ribosomal subunit protein bL34</fullName>
    </recommendedName>
    <alternativeName>
        <fullName evidence="3">50S ribosomal protein L34</fullName>
    </alternativeName>
</protein>